<evidence type="ECO:0000255" key="1">
    <source>
        <dbReference type="HAMAP-Rule" id="MF_01310"/>
    </source>
</evidence>
<evidence type="ECO:0000305" key="2"/>
<proteinExistence type="inferred from homology"/>
<feature type="chain" id="PRO_0000277893" description="Small ribosomal subunit protein uS11">
    <location>
        <begin position="1"/>
        <end position="127"/>
    </location>
</feature>
<keyword id="KW-0687">Ribonucleoprotein</keyword>
<keyword id="KW-0689">Ribosomal protein</keyword>
<keyword id="KW-0694">RNA-binding</keyword>
<keyword id="KW-0699">rRNA-binding</keyword>
<organism>
    <name type="scientific">Rickettsia typhi (strain ATCC VR-144 / Wilmington)</name>
    <dbReference type="NCBI Taxonomy" id="257363"/>
    <lineage>
        <taxon>Bacteria</taxon>
        <taxon>Pseudomonadati</taxon>
        <taxon>Pseudomonadota</taxon>
        <taxon>Alphaproteobacteria</taxon>
        <taxon>Rickettsiales</taxon>
        <taxon>Rickettsiaceae</taxon>
        <taxon>Rickettsieae</taxon>
        <taxon>Rickettsia</taxon>
        <taxon>typhus group</taxon>
    </lineage>
</organism>
<dbReference type="EMBL" id="AE017197">
    <property type="protein sequence ID" value="AAU04091.1"/>
    <property type="molecule type" value="Genomic_DNA"/>
</dbReference>
<dbReference type="RefSeq" id="WP_004596242.1">
    <property type="nucleotide sequence ID" value="NC_006142.1"/>
</dbReference>
<dbReference type="SMR" id="Q68WA1"/>
<dbReference type="GeneID" id="57569761"/>
<dbReference type="KEGG" id="rty:RT0628"/>
<dbReference type="eggNOG" id="COG0100">
    <property type="taxonomic scope" value="Bacteria"/>
</dbReference>
<dbReference type="HOGENOM" id="CLU_072439_5_0_5"/>
<dbReference type="OrthoDB" id="9806415at2"/>
<dbReference type="Proteomes" id="UP000000604">
    <property type="component" value="Chromosome"/>
</dbReference>
<dbReference type="GO" id="GO:1990904">
    <property type="term" value="C:ribonucleoprotein complex"/>
    <property type="evidence" value="ECO:0007669"/>
    <property type="project" value="UniProtKB-KW"/>
</dbReference>
<dbReference type="GO" id="GO:0005840">
    <property type="term" value="C:ribosome"/>
    <property type="evidence" value="ECO:0007669"/>
    <property type="project" value="UniProtKB-KW"/>
</dbReference>
<dbReference type="GO" id="GO:0019843">
    <property type="term" value="F:rRNA binding"/>
    <property type="evidence" value="ECO:0007669"/>
    <property type="project" value="UniProtKB-UniRule"/>
</dbReference>
<dbReference type="GO" id="GO:0003735">
    <property type="term" value="F:structural constituent of ribosome"/>
    <property type="evidence" value="ECO:0007669"/>
    <property type="project" value="InterPro"/>
</dbReference>
<dbReference type="GO" id="GO:0006412">
    <property type="term" value="P:translation"/>
    <property type="evidence" value="ECO:0007669"/>
    <property type="project" value="UniProtKB-UniRule"/>
</dbReference>
<dbReference type="Gene3D" id="3.30.420.80">
    <property type="entry name" value="Ribosomal protein S11"/>
    <property type="match status" value="1"/>
</dbReference>
<dbReference type="HAMAP" id="MF_01310">
    <property type="entry name" value="Ribosomal_uS11"/>
    <property type="match status" value="1"/>
</dbReference>
<dbReference type="InterPro" id="IPR001971">
    <property type="entry name" value="Ribosomal_uS11"/>
</dbReference>
<dbReference type="InterPro" id="IPR019981">
    <property type="entry name" value="Ribosomal_uS11_bac-type"/>
</dbReference>
<dbReference type="InterPro" id="IPR018102">
    <property type="entry name" value="Ribosomal_uS11_CS"/>
</dbReference>
<dbReference type="InterPro" id="IPR036967">
    <property type="entry name" value="Ribosomal_uS11_sf"/>
</dbReference>
<dbReference type="NCBIfam" id="NF003698">
    <property type="entry name" value="PRK05309.1"/>
    <property type="match status" value="1"/>
</dbReference>
<dbReference type="NCBIfam" id="TIGR03632">
    <property type="entry name" value="uS11_bact"/>
    <property type="match status" value="1"/>
</dbReference>
<dbReference type="PANTHER" id="PTHR11759">
    <property type="entry name" value="40S RIBOSOMAL PROTEIN S14/30S RIBOSOMAL PROTEIN S11"/>
    <property type="match status" value="1"/>
</dbReference>
<dbReference type="Pfam" id="PF00411">
    <property type="entry name" value="Ribosomal_S11"/>
    <property type="match status" value="1"/>
</dbReference>
<dbReference type="PIRSF" id="PIRSF002131">
    <property type="entry name" value="Ribosomal_S11"/>
    <property type="match status" value="1"/>
</dbReference>
<dbReference type="SUPFAM" id="SSF53137">
    <property type="entry name" value="Translational machinery components"/>
    <property type="match status" value="1"/>
</dbReference>
<dbReference type="PROSITE" id="PS00054">
    <property type="entry name" value="RIBOSOMAL_S11"/>
    <property type="match status" value="1"/>
</dbReference>
<gene>
    <name evidence="1" type="primary">rpsK</name>
    <name type="ordered locus">RT0628</name>
</gene>
<reference key="1">
    <citation type="journal article" date="2004" name="J. Bacteriol.">
        <title>Complete genome sequence of Rickettsia typhi and comparison with sequences of other Rickettsiae.</title>
        <authorList>
            <person name="McLeod M.P."/>
            <person name="Qin X."/>
            <person name="Karpathy S.E."/>
            <person name="Gioia J."/>
            <person name="Highlander S.K."/>
            <person name="Fox G.E."/>
            <person name="McNeill T.Z."/>
            <person name="Jiang H."/>
            <person name="Muzny D."/>
            <person name="Jacob L.S."/>
            <person name="Hawes A.C."/>
            <person name="Sodergren E."/>
            <person name="Gill R."/>
            <person name="Hume J."/>
            <person name="Morgan M."/>
            <person name="Fan G."/>
            <person name="Amin A.G."/>
            <person name="Gibbs R.A."/>
            <person name="Hong C."/>
            <person name="Yu X.-J."/>
            <person name="Walker D.H."/>
            <person name="Weinstock G.M."/>
        </authorList>
    </citation>
    <scope>NUCLEOTIDE SEQUENCE [LARGE SCALE GENOMIC DNA]</scope>
    <source>
        <strain>ATCC VR-144 / Wilmington</strain>
    </source>
</reference>
<protein>
    <recommendedName>
        <fullName evidence="1">Small ribosomal subunit protein uS11</fullName>
    </recommendedName>
    <alternativeName>
        <fullName evidence="2">30S ribosomal protein S11</fullName>
    </alternativeName>
</protein>
<name>RS11_RICTY</name>
<sequence length="127" mass="13583">MNQTIKVKKKKKTITLGVVHIRASFNNTIVTFTDIQGNTISSASAGGNGFKGARKATPYAAQVTIDKASEKAKECGLKTISIRIGGPGAQRESAMRALFGQNFVVTSILDVSSIAHNGVRPPKRRRV</sequence>
<comment type="function">
    <text evidence="1">Located on the platform of the 30S subunit, it bridges several disparate RNA helices of the 16S rRNA. Forms part of the Shine-Dalgarno cleft in the 70S ribosome.</text>
</comment>
<comment type="subunit">
    <text evidence="1">Part of the 30S ribosomal subunit. Interacts with proteins S7 and S18. Binds to IF-3.</text>
</comment>
<comment type="similarity">
    <text evidence="1">Belongs to the universal ribosomal protein uS11 family.</text>
</comment>
<accession>Q68WA1</accession>